<protein>
    <recommendedName>
        <fullName evidence="1">DNA ligase</fullName>
        <ecNumber evidence="1">6.5.1.2</ecNumber>
    </recommendedName>
    <alternativeName>
        <fullName evidence="1">Polydeoxyribonucleotide synthase [NAD(+)]</fullName>
    </alternativeName>
</protein>
<name>DNLJ_ENTFA</name>
<sequence length="676" mass="75584">MEQQPLTLTAATTRAQELRKQLNQYSHEYYVKDQPSVEDYVYDRLYKELVDIETEFPDLITPDSPTQRVGGKVLSGFEKAPHDIPMYSLNDGFSKEDIFAFDERVRKAIGKPVAYCCELKIDGLAISLRYENGVFVRGATRGDGTVGENITENLRTVRSVPMRLTEPISVEVRGECYMPKQSFVALNEEREENGQDIFANPRNAAAGSLRQLDTKIVAKRNLNTFLYTVADFGPMKAKTQFEALEELSAIGFRTNPERQLCQSIDEVWAYIEEYHEKRSTLPYEIDGIVIKVNEFALQDELGFTVKAPRWAIAYKFPPEEAETVVEDIEWTIGRTGVVTPTAVMAPVRVAGTTVSRASLHNADFIQMKDIRLNDHVIIYKAGDIIPEVAQVLVEKRAADSQPYEMPTHCPICHSELVHLDEEVALRCINPKCPAQIKEGLNHFVSRNAMNIDGLGPRVLAQMYDKGLVKDVADLYFLTEEQLMTLDKIKEKSANNIYTAIQGSKENSVERLIFGLGIRHVGAKAAKILAEHFGDLPTLSRATAEEIVALDSIGETIADSVVTYFENEEVHELMAELEKAQVNLTYKGLRTEQLAEVESPFKDKTVVLTGKLAQYTREEAKEKIENLGGKVTGSVSKKTDIVVAGEDAGSKLTKAESLGVTVWNEQEMVDALDASHF</sequence>
<evidence type="ECO:0000255" key="1">
    <source>
        <dbReference type="HAMAP-Rule" id="MF_01588"/>
    </source>
</evidence>
<evidence type="ECO:0000269" key="2">
    <source>
    </source>
</evidence>
<evidence type="ECO:0007829" key="3">
    <source>
        <dbReference type="PDB" id="1TA8"/>
    </source>
</evidence>
<evidence type="ECO:0007829" key="4">
    <source>
        <dbReference type="PDB" id="1TAE"/>
    </source>
</evidence>
<evidence type="ECO:0007829" key="5">
    <source>
        <dbReference type="PDB" id="4LH6"/>
    </source>
</evidence>
<evidence type="ECO:0007829" key="6">
    <source>
        <dbReference type="PDB" id="8JYD"/>
    </source>
</evidence>
<proteinExistence type="evidence at protein level"/>
<dbReference type="EC" id="6.5.1.2" evidence="1"/>
<dbReference type="EMBL" id="AE016830">
    <property type="protein sequence ID" value="AAO80542.1"/>
    <property type="molecule type" value="Genomic_DNA"/>
</dbReference>
<dbReference type="RefSeq" id="NP_814472.1">
    <property type="nucleotide sequence ID" value="NC_004668.1"/>
</dbReference>
<dbReference type="RefSeq" id="WP_002361258.1">
    <property type="nucleotide sequence ID" value="NZ_KE136527.1"/>
</dbReference>
<dbReference type="PDB" id="1TA8">
    <property type="method" value="X-ray"/>
    <property type="resolution" value="1.80 A"/>
    <property type="chains" value="A=1-323"/>
</dbReference>
<dbReference type="PDB" id="1TAE">
    <property type="method" value="X-ray"/>
    <property type="resolution" value="2.70 A"/>
    <property type="chains" value="A/B/C/D=1-324"/>
</dbReference>
<dbReference type="PDB" id="3BA8">
    <property type="method" value="X-ray"/>
    <property type="resolution" value="1.90 A"/>
    <property type="chains" value="A=1-324"/>
</dbReference>
<dbReference type="PDB" id="3BA9">
    <property type="method" value="X-ray"/>
    <property type="resolution" value="1.90 A"/>
    <property type="chains" value="A=1-324"/>
</dbReference>
<dbReference type="PDB" id="3BAA">
    <property type="method" value="X-ray"/>
    <property type="resolution" value="1.90 A"/>
    <property type="chains" value="A=1-324"/>
</dbReference>
<dbReference type="PDB" id="3BAB">
    <property type="method" value="X-ray"/>
    <property type="resolution" value="2.50 A"/>
    <property type="chains" value="A=1-324"/>
</dbReference>
<dbReference type="PDB" id="4EEQ">
    <property type="method" value="X-ray"/>
    <property type="resolution" value="2.10 A"/>
    <property type="chains" value="A=1-323"/>
</dbReference>
<dbReference type="PDB" id="4EFB">
    <property type="method" value="X-ray"/>
    <property type="resolution" value="2.20 A"/>
    <property type="chains" value="A=1-323"/>
</dbReference>
<dbReference type="PDB" id="4EFE">
    <property type="method" value="X-ray"/>
    <property type="resolution" value="2.00 A"/>
    <property type="chains" value="A=1-323"/>
</dbReference>
<dbReference type="PDB" id="4LH6">
    <property type="method" value="X-ray"/>
    <property type="resolution" value="1.65 A"/>
    <property type="chains" value="A=1-323"/>
</dbReference>
<dbReference type="PDB" id="4LH7">
    <property type="method" value="X-ray"/>
    <property type="resolution" value="1.90 A"/>
    <property type="chains" value="A=1-323"/>
</dbReference>
<dbReference type="PDB" id="8JYD">
    <property type="method" value="X-ray"/>
    <property type="resolution" value="3.00 A"/>
    <property type="chains" value="A=6-317"/>
</dbReference>
<dbReference type="PDBsum" id="1TA8"/>
<dbReference type="PDBsum" id="1TAE"/>
<dbReference type="PDBsum" id="3BA8"/>
<dbReference type="PDBsum" id="3BA9"/>
<dbReference type="PDBsum" id="3BAA"/>
<dbReference type="PDBsum" id="3BAB"/>
<dbReference type="PDBsum" id="4EEQ"/>
<dbReference type="PDBsum" id="4EFB"/>
<dbReference type="PDBsum" id="4EFE"/>
<dbReference type="PDBsum" id="4LH6"/>
<dbReference type="PDBsum" id="4LH7"/>
<dbReference type="PDBsum" id="8JYD"/>
<dbReference type="SMR" id="Q837V6"/>
<dbReference type="STRING" id="226185.EF_0722"/>
<dbReference type="DrugBank" id="DB07040">
    <property type="generic name" value="2-amino-7-fluoro-5-oxo-5H-chromeno[2,3-b]pyridine-3-carboxamide"/>
</dbReference>
<dbReference type="DrugBank" id="DB07043">
    <property type="generic name" value="7-amino-2-tert-butyl-4-(4-pyrimidin-2-ylpiperazin-1-yl)pyrido[2,3-d]pyrimidine-6-carboxamide"/>
</dbReference>
<dbReference type="DrugBank" id="DB07042">
    <property type="generic name" value="7-amino-2-tert-butyl-4-{[2-(1H-imidazol-4-yl)ethyl]amino}pyrido[2,3-d]pyrimidine-6-carboxamide"/>
</dbReference>
<dbReference type="DrugBank" id="DB07041">
    <property type="generic name" value="N-[2-(2,4-diaminopyrido[2,3-d]pyrimidin-7-yl)-2-methylpropyl]-4-phenoxybenzamide"/>
</dbReference>
<dbReference type="DrugBank" id="DB03227">
    <property type="generic name" value="Nicotinamide Mononucleotide"/>
</dbReference>
<dbReference type="EnsemblBacteria" id="AAO80542">
    <property type="protein sequence ID" value="AAO80542"/>
    <property type="gene ID" value="EF_0722"/>
</dbReference>
<dbReference type="KEGG" id="efa:EF0722"/>
<dbReference type="PATRIC" id="fig|226185.9.peg.667"/>
<dbReference type="eggNOG" id="COG0272">
    <property type="taxonomic scope" value="Bacteria"/>
</dbReference>
<dbReference type="HOGENOM" id="CLU_007764_2_1_9"/>
<dbReference type="BRENDA" id="6.5.1.2">
    <property type="organism ID" value="2095"/>
</dbReference>
<dbReference type="EvolutionaryTrace" id="Q837V6"/>
<dbReference type="Proteomes" id="UP000001415">
    <property type="component" value="Chromosome"/>
</dbReference>
<dbReference type="GO" id="GO:0005829">
    <property type="term" value="C:cytosol"/>
    <property type="evidence" value="ECO:0007669"/>
    <property type="project" value="TreeGrafter"/>
</dbReference>
<dbReference type="GO" id="GO:0003911">
    <property type="term" value="F:DNA ligase (NAD+) activity"/>
    <property type="evidence" value="ECO:0007669"/>
    <property type="project" value="UniProtKB-UniRule"/>
</dbReference>
<dbReference type="GO" id="GO:0046872">
    <property type="term" value="F:metal ion binding"/>
    <property type="evidence" value="ECO:0007669"/>
    <property type="project" value="UniProtKB-KW"/>
</dbReference>
<dbReference type="GO" id="GO:0006281">
    <property type="term" value="P:DNA repair"/>
    <property type="evidence" value="ECO:0007669"/>
    <property type="project" value="UniProtKB-KW"/>
</dbReference>
<dbReference type="GO" id="GO:0006260">
    <property type="term" value="P:DNA replication"/>
    <property type="evidence" value="ECO:0007669"/>
    <property type="project" value="UniProtKB-KW"/>
</dbReference>
<dbReference type="CDD" id="cd17748">
    <property type="entry name" value="BRCT_DNA_ligase_like"/>
    <property type="match status" value="1"/>
</dbReference>
<dbReference type="CDD" id="cd00114">
    <property type="entry name" value="LIGANc"/>
    <property type="match status" value="1"/>
</dbReference>
<dbReference type="FunFam" id="1.10.150.20:FF:000006">
    <property type="entry name" value="DNA ligase"/>
    <property type="match status" value="1"/>
</dbReference>
<dbReference type="FunFam" id="1.10.150.20:FF:000007">
    <property type="entry name" value="DNA ligase"/>
    <property type="match status" value="1"/>
</dbReference>
<dbReference type="FunFam" id="1.10.287.610:FF:000002">
    <property type="entry name" value="DNA ligase"/>
    <property type="match status" value="1"/>
</dbReference>
<dbReference type="FunFam" id="2.40.50.140:FF:000012">
    <property type="entry name" value="DNA ligase"/>
    <property type="match status" value="1"/>
</dbReference>
<dbReference type="FunFam" id="3.30.470.30:FF:000001">
    <property type="entry name" value="DNA ligase"/>
    <property type="match status" value="1"/>
</dbReference>
<dbReference type="Gene3D" id="6.20.10.30">
    <property type="match status" value="1"/>
</dbReference>
<dbReference type="Gene3D" id="1.10.150.20">
    <property type="entry name" value="5' to 3' exonuclease, C-terminal subdomain"/>
    <property type="match status" value="2"/>
</dbReference>
<dbReference type="Gene3D" id="3.40.50.10190">
    <property type="entry name" value="BRCT domain"/>
    <property type="match status" value="1"/>
</dbReference>
<dbReference type="Gene3D" id="3.30.470.30">
    <property type="entry name" value="DNA ligase/mRNA capping enzyme"/>
    <property type="match status" value="1"/>
</dbReference>
<dbReference type="Gene3D" id="1.10.287.610">
    <property type="entry name" value="Helix hairpin bin"/>
    <property type="match status" value="1"/>
</dbReference>
<dbReference type="Gene3D" id="2.40.50.140">
    <property type="entry name" value="Nucleic acid-binding proteins"/>
    <property type="match status" value="1"/>
</dbReference>
<dbReference type="HAMAP" id="MF_01588">
    <property type="entry name" value="DNA_ligase_A"/>
    <property type="match status" value="1"/>
</dbReference>
<dbReference type="InterPro" id="IPR001357">
    <property type="entry name" value="BRCT_dom"/>
</dbReference>
<dbReference type="InterPro" id="IPR036420">
    <property type="entry name" value="BRCT_dom_sf"/>
</dbReference>
<dbReference type="InterPro" id="IPR041663">
    <property type="entry name" value="DisA/LigA_HHH"/>
</dbReference>
<dbReference type="InterPro" id="IPR001679">
    <property type="entry name" value="DNA_ligase"/>
</dbReference>
<dbReference type="InterPro" id="IPR018239">
    <property type="entry name" value="DNA_ligase_AS"/>
</dbReference>
<dbReference type="InterPro" id="IPR033136">
    <property type="entry name" value="DNA_ligase_CS"/>
</dbReference>
<dbReference type="InterPro" id="IPR013839">
    <property type="entry name" value="DNAligase_adenylation"/>
</dbReference>
<dbReference type="InterPro" id="IPR013840">
    <property type="entry name" value="DNAligase_N"/>
</dbReference>
<dbReference type="InterPro" id="IPR012340">
    <property type="entry name" value="NA-bd_OB-fold"/>
</dbReference>
<dbReference type="InterPro" id="IPR004150">
    <property type="entry name" value="NAD_DNA_ligase_OB"/>
</dbReference>
<dbReference type="InterPro" id="IPR010994">
    <property type="entry name" value="RuvA_2-like"/>
</dbReference>
<dbReference type="InterPro" id="IPR004149">
    <property type="entry name" value="Znf_DNAligase_C4"/>
</dbReference>
<dbReference type="NCBIfam" id="TIGR00575">
    <property type="entry name" value="dnlj"/>
    <property type="match status" value="1"/>
</dbReference>
<dbReference type="NCBIfam" id="NF005932">
    <property type="entry name" value="PRK07956.1"/>
    <property type="match status" value="1"/>
</dbReference>
<dbReference type="PANTHER" id="PTHR23389">
    <property type="entry name" value="CHROMOSOME TRANSMISSION FIDELITY FACTOR 18"/>
    <property type="match status" value="1"/>
</dbReference>
<dbReference type="PANTHER" id="PTHR23389:SF9">
    <property type="entry name" value="DNA LIGASE"/>
    <property type="match status" value="1"/>
</dbReference>
<dbReference type="Pfam" id="PF00533">
    <property type="entry name" value="BRCT"/>
    <property type="match status" value="1"/>
</dbReference>
<dbReference type="Pfam" id="PF01653">
    <property type="entry name" value="DNA_ligase_aden"/>
    <property type="match status" value="1"/>
</dbReference>
<dbReference type="Pfam" id="PF03120">
    <property type="entry name" value="DNA_ligase_OB"/>
    <property type="match status" value="1"/>
</dbReference>
<dbReference type="Pfam" id="PF03119">
    <property type="entry name" value="DNA_ligase_ZBD"/>
    <property type="match status" value="1"/>
</dbReference>
<dbReference type="Pfam" id="PF12826">
    <property type="entry name" value="HHH_2"/>
    <property type="match status" value="1"/>
</dbReference>
<dbReference type="Pfam" id="PF14520">
    <property type="entry name" value="HHH_5"/>
    <property type="match status" value="1"/>
</dbReference>
<dbReference type="PIRSF" id="PIRSF001604">
    <property type="entry name" value="LigA"/>
    <property type="match status" value="1"/>
</dbReference>
<dbReference type="SMART" id="SM00292">
    <property type="entry name" value="BRCT"/>
    <property type="match status" value="1"/>
</dbReference>
<dbReference type="SMART" id="SM00532">
    <property type="entry name" value="LIGANc"/>
    <property type="match status" value="1"/>
</dbReference>
<dbReference type="SUPFAM" id="SSF52113">
    <property type="entry name" value="BRCT domain"/>
    <property type="match status" value="1"/>
</dbReference>
<dbReference type="SUPFAM" id="SSF56091">
    <property type="entry name" value="DNA ligase/mRNA capping enzyme, catalytic domain"/>
    <property type="match status" value="1"/>
</dbReference>
<dbReference type="SUPFAM" id="SSF50249">
    <property type="entry name" value="Nucleic acid-binding proteins"/>
    <property type="match status" value="1"/>
</dbReference>
<dbReference type="SUPFAM" id="SSF47781">
    <property type="entry name" value="RuvA domain 2-like"/>
    <property type="match status" value="1"/>
</dbReference>
<dbReference type="PROSITE" id="PS50172">
    <property type="entry name" value="BRCT"/>
    <property type="match status" value="1"/>
</dbReference>
<dbReference type="PROSITE" id="PS01055">
    <property type="entry name" value="DNA_LIGASE_N1"/>
    <property type="match status" value="1"/>
</dbReference>
<dbReference type="PROSITE" id="PS01056">
    <property type="entry name" value="DNA_LIGASE_N2"/>
    <property type="match status" value="1"/>
</dbReference>
<organism>
    <name type="scientific">Enterococcus faecalis (strain ATCC 700802 / V583)</name>
    <dbReference type="NCBI Taxonomy" id="226185"/>
    <lineage>
        <taxon>Bacteria</taxon>
        <taxon>Bacillati</taxon>
        <taxon>Bacillota</taxon>
        <taxon>Bacilli</taxon>
        <taxon>Lactobacillales</taxon>
        <taxon>Enterococcaceae</taxon>
        <taxon>Enterococcus</taxon>
    </lineage>
</organism>
<reference key="1">
    <citation type="journal article" date="2003" name="Science">
        <title>Role of mobile DNA in the evolution of vancomycin-resistant Enterococcus faecalis.</title>
        <authorList>
            <person name="Paulsen I.T."/>
            <person name="Banerjei L."/>
            <person name="Myers G.S.A."/>
            <person name="Nelson K.E."/>
            <person name="Seshadri R."/>
            <person name="Read T.D."/>
            <person name="Fouts D.E."/>
            <person name="Eisen J.A."/>
            <person name="Gill S.R."/>
            <person name="Heidelberg J.F."/>
            <person name="Tettelin H."/>
            <person name="Dodson R.J."/>
            <person name="Umayam L.A."/>
            <person name="Brinkac L.M."/>
            <person name="Beanan M.J."/>
            <person name="Daugherty S.C."/>
            <person name="DeBoy R.T."/>
            <person name="Durkin S.A."/>
            <person name="Kolonay J.F."/>
            <person name="Madupu R."/>
            <person name="Nelson W.C."/>
            <person name="Vamathevan J.J."/>
            <person name="Tran B."/>
            <person name="Upton J."/>
            <person name="Hansen T."/>
            <person name="Shetty J."/>
            <person name="Khouri H.M."/>
            <person name="Utterback T.R."/>
            <person name="Radune D."/>
            <person name="Ketchum K.A."/>
            <person name="Dougherty B.A."/>
            <person name="Fraser C.M."/>
        </authorList>
    </citation>
    <scope>NUCLEOTIDE SEQUENCE [LARGE SCALE GENOMIC DNA]</scope>
    <source>
        <strain>ATCC 700802 / V583</strain>
    </source>
</reference>
<reference key="2">
    <citation type="journal article" date="2004" name="Structure">
        <title>Structural rearrangement accompanying NAD+ synthesis within a bacterial DNA ligase crystal.</title>
        <authorList>
            <person name="Gajiwala K.S."/>
            <person name="Pinko C."/>
        </authorList>
    </citation>
    <scope>X-RAY CRYSTALLOGRAPHY (1.8 ANGSTROMS) OF 1-325 IN COMPLEXES WITH NAD AND NICOTINAMIDE NUCLEOTIDE</scope>
</reference>
<accession>Q837V6</accession>
<comment type="function">
    <text evidence="1">DNA ligase that catalyzes the formation of phosphodiester linkages between 5'-phosphoryl and 3'-hydroxyl groups in double-stranded DNA using NAD as a coenzyme and as the energy source for the reaction. It is essential for DNA replication and repair of damaged DNA.</text>
</comment>
<comment type="catalytic activity">
    <reaction evidence="1">
        <text>NAD(+) + (deoxyribonucleotide)n-3'-hydroxyl + 5'-phospho-(deoxyribonucleotide)m = (deoxyribonucleotide)n+m + AMP + beta-nicotinamide D-nucleotide.</text>
        <dbReference type="EC" id="6.5.1.2"/>
    </reaction>
</comment>
<comment type="cofactor">
    <cofactor evidence="1">
        <name>Mg(2+)</name>
        <dbReference type="ChEBI" id="CHEBI:18420"/>
    </cofactor>
    <cofactor evidence="1">
        <name>Mn(2+)</name>
        <dbReference type="ChEBI" id="CHEBI:29035"/>
    </cofactor>
</comment>
<comment type="similarity">
    <text evidence="1">Belongs to the NAD-dependent DNA ligase family. LigA subfamily.</text>
</comment>
<feature type="chain" id="PRO_0000313228" description="DNA ligase">
    <location>
        <begin position="1"/>
        <end position="676"/>
    </location>
</feature>
<feature type="domain" description="BRCT" evidence="1">
    <location>
        <begin position="595"/>
        <end position="676"/>
    </location>
</feature>
<feature type="active site" description="N6-AMP-lysine intermediate" evidence="1">
    <location>
        <position position="120"/>
    </location>
</feature>
<feature type="binding site" evidence="1 2">
    <location>
        <begin position="39"/>
        <end position="43"/>
    </location>
    <ligand>
        <name>NAD(+)</name>
        <dbReference type="ChEBI" id="CHEBI:57540"/>
    </ligand>
</feature>
<feature type="binding site" evidence="1 2">
    <location>
        <begin position="88"/>
        <end position="91"/>
    </location>
    <ligand>
        <name>NAD(+)</name>
        <dbReference type="ChEBI" id="CHEBI:57540"/>
    </ligand>
</feature>
<feature type="binding site" evidence="1 2">
    <location>
        <position position="118"/>
    </location>
    <ligand>
        <name>NAD(+)</name>
        <dbReference type="ChEBI" id="CHEBI:57540"/>
    </ligand>
</feature>
<feature type="binding site" evidence="1 2">
    <location>
        <position position="141"/>
    </location>
    <ligand>
        <name>NAD(+)</name>
        <dbReference type="ChEBI" id="CHEBI:57540"/>
    </ligand>
</feature>
<feature type="binding site" evidence="1 2">
    <location>
        <position position="175"/>
    </location>
    <ligand>
        <name>NAD(+)</name>
        <dbReference type="ChEBI" id="CHEBI:57540"/>
    </ligand>
</feature>
<feature type="binding site" evidence="1 2">
    <location>
        <position position="291"/>
    </location>
    <ligand>
        <name>NAD(+)</name>
        <dbReference type="ChEBI" id="CHEBI:57540"/>
    </ligand>
</feature>
<feature type="binding site" evidence="1 2">
    <location>
        <position position="315"/>
    </location>
    <ligand>
        <name>NAD(+)</name>
        <dbReference type="ChEBI" id="CHEBI:57540"/>
    </ligand>
</feature>
<feature type="binding site" evidence="1">
    <location>
        <position position="409"/>
    </location>
    <ligand>
        <name>Zn(2+)</name>
        <dbReference type="ChEBI" id="CHEBI:29105"/>
    </ligand>
</feature>
<feature type="binding site" evidence="1">
    <location>
        <position position="412"/>
    </location>
    <ligand>
        <name>Zn(2+)</name>
        <dbReference type="ChEBI" id="CHEBI:29105"/>
    </ligand>
</feature>
<feature type="binding site" evidence="1">
    <location>
        <position position="427"/>
    </location>
    <ligand>
        <name>Zn(2+)</name>
        <dbReference type="ChEBI" id="CHEBI:29105"/>
    </ligand>
</feature>
<feature type="binding site" evidence="1">
    <location>
        <position position="432"/>
    </location>
    <ligand>
        <name>Zn(2+)</name>
        <dbReference type="ChEBI" id="CHEBI:29105"/>
    </ligand>
</feature>
<feature type="helix" evidence="5">
    <location>
        <begin position="8"/>
        <end position="30"/>
    </location>
</feature>
<feature type="strand" evidence="4">
    <location>
        <begin position="31"/>
        <end position="33"/>
    </location>
</feature>
<feature type="helix" evidence="5">
    <location>
        <begin position="39"/>
        <end position="55"/>
    </location>
</feature>
<feature type="helix" evidence="5">
    <location>
        <begin position="57"/>
        <end position="59"/>
    </location>
</feature>
<feature type="helix" evidence="5">
    <location>
        <begin position="65"/>
        <end position="67"/>
    </location>
</feature>
<feature type="strand" evidence="5">
    <location>
        <begin position="79"/>
        <end position="81"/>
    </location>
</feature>
<feature type="strand" evidence="6">
    <location>
        <begin position="90"/>
        <end position="92"/>
    </location>
</feature>
<feature type="helix" evidence="5">
    <location>
        <begin position="95"/>
        <end position="109"/>
    </location>
</feature>
<feature type="strand" evidence="5">
    <location>
        <begin position="115"/>
        <end position="121"/>
    </location>
</feature>
<feature type="strand" evidence="5">
    <location>
        <begin position="123"/>
        <end position="131"/>
    </location>
</feature>
<feature type="strand" evidence="5">
    <location>
        <begin position="134"/>
        <end position="140"/>
    </location>
</feature>
<feature type="strand" evidence="5">
    <location>
        <begin position="144"/>
        <end position="149"/>
    </location>
</feature>
<feature type="helix" evidence="5">
    <location>
        <begin position="151"/>
        <end position="155"/>
    </location>
</feature>
<feature type="strand" evidence="4">
    <location>
        <begin position="165"/>
        <end position="167"/>
    </location>
</feature>
<feature type="strand" evidence="5">
    <location>
        <begin position="170"/>
        <end position="177"/>
    </location>
</feature>
<feature type="helix" evidence="5">
    <location>
        <begin position="180"/>
        <end position="192"/>
    </location>
</feature>
<feature type="helix" evidence="5">
    <location>
        <begin position="201"/>
        <end position="209"/>
    </location>
</feature>
<feature type="helix" evidence="5">
    <location>
        <begin position="214"/>
        <end position="219"/>
    </location>
</feature>
<feature type="strand" evidence="5">
    <location>
        <begin position="223"/>
        <end position="230"/>
    </location>
</feature>
<feature type="helix" evidence="5">
    <location>
        <begin position="240"/>
        <end position="250"/>
    </location>
</feature>
<feature type="strand" evidence="5">
    <location>
        <begin position="259"/>
        <end position="263"/>
    </location>
</feature>
<feature type="helix" evidence="5">
    <location>
        <begin position="264"/>
        <end position="277"/>
    </location>
</feature>
<feature type="helix" evidence="5">
    <location>
        <begin position="278"/>
        <end position="280"/>
    </location>
</feature>
<feature type="strand" evidence="3">
    <location>
        <begin position="281"/>
        <end position="283"/>
    </location>
</feature>
<feature type="strand" evidence="5">
    <location>
        <begin position="285"/>
        <end position="294"/>
    </location>
</feature>
<feature type="helix" evidence="5">
    <location>
        <begin position="295"/>
        <end position="301"/>
    </location>
</feature>
<feature type="strand" evidence="5">
    <location>
        <begin position="305"/>
        <end position="315"/>
    </location>
</feature>
<feature type="helix" evidence="5">
    <location>
        <begin position="319"/>
        <end position="321"/>
    </location>
</feature>
<gene>
    <name evidence="1" type="primary">ligA</name>
    <name type="ordered locus">EF_0722</name>
</gene>
<keyword id="KW-0002">3D-structure</keyword>
<keyword id="KW-0227">DNA damage</keyword>
<keyword id="KW-0234">DNA repair</keyword>
<keyword id="KW-0235">DNA replication</keyword>
<keyword id="KW-0436">Ligase</keyword>
<keyword id="KW-0460">Magnesium</keyword>
<keyword id="KW-0464">Manganese</keyword>
<keyword id="KW-0479">Metal-binding</keyword>
<keyword id="KW-0520">NAD</keyword>
<keyword id="KW-1185">Reference proteome</keyword>
<keyword id="KW-0862">Zinc</keyword>